<name>FTSX_STRR6</name>
<protein>
    <recommendedName>
        <fullName evidence="3">Cell division protein FtsX</fullName>
    </recommendedName>
</protein>
<reference evidence="7" key="1">
    <citation type="journal article" date="2001" name="J. Bacteriol.">
        <title>Genome of the bacterium Streptococcus pneumoniae strain R6.</title>
        <authorList>
            <person name="Hoskins J."/>
            <person name="Alborn W.E. Jr."/>
            <person name="Arnold J."/>
            <person name="Blaszczak L.C."/>
            <person name="Burgett S."/>
            <person name="DeHoff B.S."/>
            <person name="Estrem S.T."/>
            <person name="Fritz L."/>
            <person name="Fu D.-J."/>
            <person name="Fuller W."/>
            <person name="Geringer C."/>
            <person name="Gilmour R."/>
            <person name="Glass J.S."/>
            <person name="Khoja H."/>
            <person name="Kraft A.R."/>
            <person name="Lagace R.E."/>
            <person name="LeBlanc D.J."/>
            <person name="Lee L.N."/>
            <person name="Lefkowitz E.J."/>
            <person name="Lu J."/>
            <person name="Matsushima P."/>
            <person name="McAhren S.M."/>
            <person name="McHenney M."/>
            <person name="McLeaster K."/>
            <person name="Mundy C.W."/>
            <person name="Nicas T.I."/>
            <person name="Norris F.H."/>
            <person name="O'Gara M."/>
            <person name="Peery R.B."/>
            <person name="Robertson G.T."/>
            <person name="Rockey P."/>
            <person name="Sun P.-M."/>
            <person name="Winkler M.E."/>
            <person name="Yang Y."/>
            <person name="Young-Bellido M."/>
            <person name="Zhao G."/>
            <person name="Zook C.A."/>
            <person name="Baltz R.H."/>
            <person name="Jaskunas S.R."/>
            <person name="Rosteck P.R. Jr."/>
            <person name="Skatrud P.L."/>
            <person name="Glass J.I."/>
        </authorList>
    </citation>
    <scope>NUCLEOTIDE SEQUENCE [LARGE SCALE GENOMIC DNA]</scope>
    <source>
        <strain evidence="7">ATCC BAA-255 / R6</strain>
    </source>
</reference>
<reference evidence="5" key="2">
    <citation type="journal article" date="2011" name="Proc. Natl. Acad. Sci. U.S.A.">
        <title>Essential PcsB putative peptidoglycan hydrolase interacts with the essential FtsXSpn cell division protein in Streptococcus pneumoniae D39.</title>
        <authorList>
            <person name="Sham L.T."/>
            <person name="Barendt S.M."/>
            <person name="Kopecky K.E."/>
            <person name="Winkler M.E."/>
        </authorList>
    </citation>
    <scope>INTERACTION WITH FTSE AND PCSB</scope>
    <scope>SUBCELLULAR LOCATION</scope>
    <scope>IDENTIFICATION BY MASS SPECTROMETRY</scope>
</reference>
<accession>Q8DQH3</accession>
<feature type="chain" id="PRO_0000459691" description="Cell division protein FtsX">
    <location>
        <begin position="1"/>
        <end position="308"/>
    </location>
</feature>
<feature type="topological domain" description="Extracellular" evidence="5">
    <location>
        <begin position="1"/>
        <end position="24"/>
    </location>
</feature>
<feature type="transmembrane region" description="Helical" evidence="2">
    <location>
        <begin position="25"/>
        <end position="45"/>
    </location>
</feature>
<feature type="topological domain" description="Cytoplasmic" evidence="5">
    <location>
        <begin position="46"/>
        <end position="178"/>
    </location>
</feature>
<feature type="transmembrane region" description="Helical" evidence="2">
    <location>
        <begin position="179"/>
        <end position="199"/>
    </location>
</feature>
<feature type="topological domain" description="Extracellular" evidence="5">
    <location>
        <begin position="200"/>
        <end position="236"/>
    </location>
</feature>
<feature type="transmembrane region" description="Helical" evidence="2">
    <location>
        <begin position="237"/>
        <end position="257"/>
    </location>
</feature>
<feature type="topological domain" description="Cytoplasmic" evidence="5">
    <location>
        <begin position="258"/>
        <end position="276"/>
    </location>
</feature>
<feature type="transmembrane region" description="Helical" evidence="2">
    <location>
        <begin position="277"/>
        <end position="297"/>
    </location>
</feature>
<feature type="topological domain" description="Extracellular" evidence="5">
    <location>
        <begin position="298"/>
        <end position="308"/>
    </location>
</feature>
<proteinExistence type="evidence at protein level"/>
<evidence type="ECO:0000250" key="1">
    <source>
        <dbReference type="UniProtKB" id="Q04LE4"/>
    </source>
</evidence>
<evidence type="ECO:0000255" key="2"/>
<evidence type="ECO:0000255" key="3">
    <source>
        <dbReference type="PIRNR" id="PIRNR003097"/>
    </source>
</evidence>
<evidence type="ECO:0000269" key="4">
    <source>
    </source>
</evidence>
<evidence type="ECO:0000305" key="5"/>
<evidence type="ECO:0000312" key="6">
    <source>
        <dbReference type="EMBL" id="AAK99471.1"/>
    </source>
</evidence>
<evidence type="ECO:0000312" key="7">
    <source>
        <dbReference type="Proteomes" id="UP000000586"/>
    </source>
</evidence>
<organism evidence="7">
    <name type="scientific">Streptococcus pneumoniae (strain ATCC BAA-255 / R6)</name>
    <dbReference type="NCBI Taxonomy" id="171101"/>
    <lineage>
        <taxon>Bacteria</taxon>
        <taxon>Bacillati</taxon>
        <taxon>Bacillota</taxon>
        <taxon>Bacilli</taxon>
        <taxon>Lactobacillales</taxon>
        <taxon>Streptococcaceae</taxon>
        <taxon>Streptococcus</taxon>
    </lineage>
</organism>
<dbReference type="EMBL" id="AE007317">
    <property type="protein sequence ID" value="AAK99471.1"/>
    <property type="status" value="ALT_INIT"/>
    <property type="molecule type" value="Genomic_DNA"/>
</dbReference>
<dbReference type="PIR" id="C97955">
    <property type="entry name" value="C97955"/>
</dbReference>
<dbReference type="RefSeq" id="NP_358261.1">
    <property type="nucleotide sequence ID" value="NC_003098.1"/>
</dbReference>
<dbReference type="RefSeq" id="WP_000625532.1">
    <property type="nucleotide sequence ID" value="NC_003098.1"/>
</dbReference>
<dbReference type="SMR" id="Q8DQH3"/>
<dbReference type="STRING" id="171101.spr0667"/>
<dbReference type="KEGG" id="spr:spr0667"/>
<dbReference type="PATRIC" id="fig|171101.6.peg.739"/>
<dbReference type="eggNOG" id="COG2177">
    <property type="taxonomic scope" value="Bacteria"/>
</dbReference>
<dbReference type="HOGENOM" id="CLU_073546_2_2_9"/>
<dbReference type="Proteomes" id="UP000000586">
    <property type="component" value="Chromosome"/>
</dbReference>
<dbReference type="GO" id="GO:0005886">
    <property type="term" value="C:plasma membrane"/>
    <property type="evidence" value="ECO:0007669"/>
    <property type="project" value="UniProtKB-SubCell"/>
</dbReference>
<dbReference type="GO" id="GO:0051301">
    <property type="term" value="P:cell division"/>
    <property type="evidence" value="ECO:0007669"/>
    <property type="project" value="UniProtKB-KW"/>
</dbReference>
<dbReference type="Gene3D" id="3.30.70.3040">
    <property type="match status" value="1"/>
</dbReference>
<dbReference type="InterPro" id="IPR003838">
    <property type="entry name" value="ABC3_permease_C"/>
</dbReference>
<dbReference type="InterPro" id="IPR004513">
    <property type="entry name" value="FtsX"/>
</dbReference>
<dbReference type="InterPro" id="IPR040690">
    <property type="entry name" value="FtsX_ECD"/>
</dbReference>
<dbReference type="NCBIfam" id="NF038347">
    <property type="entry name" value="FtsX_Gpos"/>
    <property type="match status" value="1"/>
</dbReference>
<dbReference type="PANTHER" id="PTHR47755">
    <property type="entry name" value="CELL DIVISION PROTEIN FTSX"/>
    <property type="match status" value="1"/>
</dbReference>
<dbReference type="PANTHER" id="PTHR47755:SF1">
    <property type="entry name" value="CELL DIVISION PROTEIN FTSX"/>
    <property type="match status" value="1"/>
</dbReference>
<dbReference type="Pfam" id="PF02687">
    <property type="entry name" value="FtsX"/>
    <property type="match status" value="1"/>
</dbReference>
<dbReference type="Pfam" id="PF18075">
    <property type="entry name" value="FtsX_ECD"/>
    <property type="match status" value="1"/>
</dbReference>
<dbReference type="PIRSF" id="PIRSF003097">
    <property type="entry name" value="FtsX"/>
    <property type="match status" value="1"/>
</dbReference>
<keyword id="KW-0131">Cell cycle</keyword>
<keyword id="KW-0132">Cell division</keyword>
<keyword id="KW-1003">Cell membrane</keyword>
<keyword id="KW-0472">Membrane</keyword>
<keyword id="KW-1185">Reference proteome</keyword>
<keyword id="KW-0812">Transmembrane</keyword>
<keyword id="KW-1133">Transmembrane helix</keyword>
<comment type="function">
    <text evidence="1 3">Part of the ABC transporter FtsEX involved in asymmetric cellular division facilitating the initiation of sporulation (By similarity). Required in maintaining normal growth and cellular morphology (By similarity).</text>
</comment>
<comment type="subunit">
    <text evidence="4">Interacts with FtsE (PubMed:22006325). Interacts (via large extracellular loop) with PcsB (via N-terminal coiled coil domain) (PubMed:22006325). This interaction directs PcsB to equatorial and septal sites of dividing cells (PubMed:22006325).</text>
</comment>
<comment type="subcellular location">
    <subcellularLocation>
        <location evidence="3 4">Cell membrane</location>
        <topology evidence="5">Multi-pass membrane protein</topology>
    </subcellularLocation>
</comment>
<comment type="similarity">
    <text evidence="5">Belongs to the ABC-4 integral membrane protein family. FtsX subfamily.</text>
</comment>
<comment type="sequence caution" evidence="5">
    <conflict type="erroneous initiation">
        <sequence resource="EMBL-CDS" id="AAK99471"/>
    </conflict>
    <text>Extended N-terminus.</text>
</comment>
<gene>
    <name evidence="6" type="primary">ftsX</name>
    <name evidence="6" type="ordered locus">spr0667</name>
</gene>
<sequence>MISRFFRHLFEALKSLKRNGWMTVAAVSSVMITLTLVAIFASVIFNTAKLATDIENNVRVVVYIRKDVEDNSQTIEKEGQTVTNNDYHKVYDSLKNMSTVKSVTFSSKEEQYEKLTEIMGDNWKIFEGDANPLYDAYIVEANAPNDVKTIAEDAKKIEGVSEVQDGGANTERLFKLASFIRVWGLGIAALLIFIAAFLISNTIRITIISRSREIQIMRLVGAKNSYIRGPFLLEGAFIGLLGAIAPSVLVFIVYQIVYQSVNKSLVGQNLSMISPDLFSPLMIALLFVIGVFIGSLGSGISMRRFLKI</sequence>